<gene>
    <name evidence="1" type="primary">rplE</name>
    <name type="ordered locus">XCC0907</name>
</gene>
<evidence type="ECO:0000255" key="1">
    <source>
        <dbReference type="HAMAP-Rule" id="MF_01333"/>
    </source>
</evidence>
<evidence type="ECO:0000305" key="2"/>
<dbReference type="EMBL" id="AE008922">
    <property type="protein sequence ID" value="AAM40217.1"/>
    <property type="molecule type" value="Genomic_DNA"/>
</dbReference>
<dbReference type="RefSeq" id="NP_636293.1">
    <property type="nucleotide sequence ID" value="NC_003902.1"/>
</dbReference>
<dbReference type="RefSeq" id="WP_010371090.1">
    <property type="nucleotide sequence ID" value="NC_003902.1"/>
</dbReference>
<dbReference type="SMR" id="Q8PC39"/>
<dbReference type="STRING" id="190485.XCC0907"/>
<dbReference type="EnsemblBacteria" id="AAM40217">
    <property type="protein sequence ID" value="AAM40217"/>
    <property type="gene ID" value="XCC0907"/>
</dbReference>
<dbReference type="GeneID" id="97210516"/>
<dbReference type="KEGG" id="xcc:XCC0907"/>
<dbReference type="PATRIC" id="fig|190485.4.peg.979"/>
<dbReference type="eggNOG" id="COG0094">
    <property type="taxonomic scope" value="Bacteria"/>
</dbReference>
<dbReference type="HOGENOM" id="CLU_061015_2_1_6"/>
<dbReference type="OrthoDB" id="9806626at2"/>
<dbReference type="Proteomes" id="UP000001010">
    <property type="component" value="Chromosome"/>
</dbReference>
<dbReference type="GO" id="GO:0022625">
    <property type="term" value="C:cytosolic large ribosomal subunit"/>
    <property type="evidence" value="ECO:0000318"/>
    <property type="project" value="GO_Central"/>
</dbReference>
<dbReference type="GO" id="GO:0003723">
    <property type="term" value="F:RNA binding"/>
    <property type="evidence" value="ECO:0000318"/>
    <property type="project" value="GO_Central"/>
</dbReference>
<dbReference type="GO" id="GO:0019843">
    <property type="term" value="F:rRNA binding"/>
    <property type="evidence" value="ECO:0007669"/>
    <property type="project" value="UniProtKB-UniRule"/>
</dbReference>
<dbReference type="GO" id="GO:0003735">
    <property type="term" value="F:structural constituent of ribosome"/>
    <property type="evidence" value="ECO:0000318"/>
    <property type="project" value="GO_Central"/>
</dbReference>
<dbReference type="GO" id="GO:0000049">
    <property type="term" value="F:tRNA binding"/>
    <property type="evidence" value="ECO:0007669"/>
    <property type="project" value="UniProtKB-UniRule"/>
</dbReference>
<dbReference type="GO" id="GO:0006412">
    <property type="term" value="P:translation"/>
    <property type="evidence" value="ECO:0000318"/>
    <property type="project" value="GO_Central"/>
</dbReference>
<dbReference type="FunFam" id="3.30.1440.10:FF:000001">
    <property type="entry name" value="50S ribosomal protein L5"/>
    <property type="match status" value="1"/>
</dbReference>
<dbReference type="Gene3D" id="3.30.1440.10">
    <property type="match status" value="1"/>
</dbReference>
<dbReference type="HAMAP" id="MF_01333_B">
    <property type="entry name" value="Ribosomal_uL5_B"/>
    <property type="match status" value="1"/>
</dbReference>
<dbReference type="InterPro" id="IPR002132">
    <property type="entry name" value="Ribosomal_uL5"/>
</dbReference>
<dbReference type="InterPro" id="IPR020930">
    <property type="entry name" value="Ribosomal_uL5_bac-type"/>
</dbReference>
<dbReference type="InterPro" id="IPR031309">
    <property type="entry name" value="Ribosomal_uL5_C"/>
</dbReference>
<dbReference type="InterPro" id="IPR020929">
    <property type="entry name" value="Ribosomal_uL5_CS"/>
</dbReference>
<dbReference type="InterPro" id="IPR022803">
    <property type="entry name" value="Ribosomal_uL5_dom_sf"/>
</dbReference>
<dbReference type="InterPro" id="IPR031310">
    <property type="entry name" value="Ribosomal_uL5_N"/>
</dbReference>
<dbReference type="NCBIfam" id="NF000585">
    <property type="entry name" value="PRK00010.1"/>
    <property type="match status" value="1"/>
</dbReference>
<dbReference type="PANTHER" id="PTHR11994">
    <property type="entry name" value="60S RIBOSOMAL PROTEIN L11-RELATED"/>
    <property type="match status" value="1"/>
</dbReference>
<dbReference type="Pfam" id="PF00281">
    <property type="entry name" value="Ribosomal_L5"/>
    <property type="match status" value="1"/>
</dbReference>
<dbReference type="Pfam" id="PF00673">
    <property type="entry name" value="Ribosomal_L5_C"/>
    <property type="match status" value="1"/>
</dbReference>
<dbReference type="PIRSF" id="PIRSF002161">
    <property type="entry name" value="Ribosomal_L5"/>
    <property type="match status" value="1"/>
</dbReference>
<dbReference type="SUPFAM" id="SSF55282">
    <property type="entry name" value="RL5-like"/>
    <property type="match status" value="1"/>
</dbReference>
<dbReference type="PROSITE" id="PS00358">
    <property type="entry name" value="RIBOSOMAL_L5"/>
    <property type="match status" value="1"/>
</dbReference>
<protein>
    <recommendedName>
        <fullName evidence="1">Large ribosomal subunit protein uL5</fullName>
    </recommendedName>
    <alternativeName>
        <fullName evidence="2">50S ribosomal protein L5</fullName>
    </alternativeName>
</protein>
<comment type="function">
    <text evidence="1">This is one of the proteins that bind and probably mediate the attachment of the 5S RNA into the large ribosomal subunit, where it forms part of the central protuberance. In the 70S ribosome it contacts protein S13 of the 30S subunit (bridge B1b), connecting the 2 subunits; this bridge is implicated in subunit movement. Contacts the P site tRNA; the 5S rRNA and some of its associated proteins might help stabilize positioning of ribosome-bound tRNAs.</text>
</comment>
<comment type="subunit">
    <text evidence="1">Part of the 50S ribosomal subunit; part of the 5S rRNA/L5/L18/L25 subcomplex. Contacts the 5S rRNA and the P site tRNA. Forms a bridge to the 30S subunit in the 70S ribosome.</text>
</comment>
<comment type="similarity">
    <text evidence="1">Belongs to the universal ribosomal protein uL5 family.</text>
</comment>
<organism>
    <name type="scientific">Xanthomonas campestris pv. campestris (strain ATCC 33913 / DSM 3586 / NCPPB 528 / LMG 568 / P 25)</name>
    <dbReference type="NCBI Taxonomy" id="190485"/>
    <lineage>
        <taxon>Bacteria</taxon>
        <taxon>Pseudomonadati</taxon>
        <taxon>Pseudomonadota</taxon>
        <taxon>Gammaproteobacteria</taxon>
        <taxon>Lysobacterales</taxon>
        <taxon>Lysobacteraceae</taxon>
        <taxon>Xanthomonas</taxon>
    </lineage>
</organism>
<reference key="1">
    <citation type="journal article" date="2002" name="Nature">
        <title>Comparison of the genomes of two Xanthomonas pathogens with differing host specificities.</title>
        <authorList>
            <person name="da Silva A.C.R."/>
            <person name="Ferro J.A."/>
            <person name="Reinach F.C."/>
            <person name="Farah C.S."/>
            <person name="Furlan L.R."/>
            <person name="Quaggio R.B."/>
            <person name="Monteiro-Vitorello C.B."/>
            <person name="Van Sluys M.A."/>
            <person name="Almeida N.F. Jr."/>
            <person name="Alves L.M.C."/>
            <person name="do Amaral A.M."/>
            <person name="Bertolini M.C."/>
            <person name="Camargo L.E.A."/>
            <person name="Camarotte G."/>
            <person name="Cannavan F."/>
            <person name="Cardozo J."/>
            <person name="Chambergo F."/>
            <person name="Ciapina L.P."/>
            <person name="Cicarelli R.M.B."/>
            <person name="Coutinho L.L."/>
            <person name="Cursino-Santos J.R."/>
            <person name="El-Dorry H."/>
            <person name="Faria J.B."/>
            <person name="Ferreira A.J.S."/>
            <person name="Ferreira R.C.C."/>
            <person name="Ferro M.I.T."/>
            <person name="Formighieri E.F."/>
            <person name="Franco M.C."/>
            <person name="Greggio C.C."/>
            <person name="Gruber A."/>
            <person name="Katsuyama A.M."/>
            <person name="Kishi L.T."/>
            <person name="Leite R.P."/>
            <person name="Lemos E.G.M."/>
            <person name="Lemos M.V.F."/>
            <person name="Locali E.C."/>
            <person name="Machado M.A."/>
            <person name="Madeira A.M.B.N."/>
            <person name="Martinez-Rossi N.M."/>
            <person name="Martins E.C."/>
            <person name="Meidanis J."/>
            <person name="Menck C.F.M."/>
            <person name="Miyaki C.Y."/>
            <person name="Moon D.H."/>
            <person name="Moreira L.M."/>
            <person name="Novo M.T.M."/>
            <person name="Okura V.K."/>
            <person name="Oliveira M.C."/>
            <person name="Oliveira V.R."/>
            <person name="Pereira H.A."/>
            <person name="Rossi A."/>
            <person name="Sena J.A.D."/>
            <person name="Silva C."/>
            <person name="de Souza R.F."/>
            <person name="Spinola L.A.F."/>
            <person name="Takita M.A."/>
            <person name="Tamura R.E."/>
            <person name="Teixeira E.C."/>
            <person name="Tezza R.I.D."/>
            <person name="Trindade dos Santos M."/>
            <person name="Truffi D."/>
            <person name="Tsai S.M."/>
            <person name="White F.F."/>
            <person name="Setubal J.C."/>
            <person name="Kitajima J.P."/>
        </authorList>
    </citation>
    <scope>NUCLEOTIDE SEQUENCE [LARGE SCALE GENOMIC DNA]</scope>
    <source>
        <strain>ATCC 33913 / DSM 3586 / NCPPB 528 / LMG 568 / P 25</strain>
    </source>
</reference>
<proteinExistence type="inferred from homology"/>
<keyword id="KW-1185">Reference proteome</keyword>
<keyword id="KW-0687">Ribonucleoprotein</keyword>
<keyword id="KW-0689">Ribosomal protein</keyword>
<keyword id="KW-0694">RNA-binding</keyword>
<keyword id="KW-0699">rRNA-binding</keyword>
<keyword id="KW-0820">tRNA-binding</keyword>
<feature type="chain" id="PRO_0000125030" description="Large ribosomal subunit protein uL5">
    <location>
        <begin position="1"/>
        <end position="180"/>
    </location>
</feature>
<sequence length="180" mass="20159">MNTRLEKFYKENVVPALMKEFGYTNPMEVPKLVKVTLNMGVGEAATNKKILENAVADMSKISGQKPVVTKSRVSVASFKIRDGWPIGCKTTLRRAKMYEFLDRLINISLPRVRDFRGVSGRSFDGRGNFNMGVKEQIIFPEIDFDAVDAIRGMDIAITTTAKTDAEAKALLAAFKFPFRN</sequence>
<name>RL5_XANCP</name>
<accession>Q8PC39</accession>